<reference key="1">
    <citation type="journal article" date="2000" name="Mol. Gen. Genet.">
        <title>Complete nucleotide sequence of the Oenothera elata plastid chromosome, representing plastome I of the five distinguishable Euoenothera plastomes.</title>
        <authorList>
            <person name="Hupfer H."/>
            <person name="Swiatek M."/>
            <person name="Hornung S."/>
            <person name="Herrmann R.G."/>
            <person name="Maier R.M."/>
            <person name="Chiu W.-L."/>
            <person name="Sears B."/>
        </authorList>
    </citation>
    <scope>NUCLEOTIDE SEQUENCE [LARGE SCALE GENOMIC DNA]</scope>
    <source>
        <strain>cv. Johansen</strain>
    </source>
</reference>
<reference key="2">
    <citation type="journal article" date="2008" name="Nucleic Acids Res.">
        <title>The complete nucleotide sequences of the five genetically distinct plastid genomes of Oenothera, subsection Oenothera: I. Sequence evaluation and plastome evolution.</title>
        <authorList>
            <person name="Greiner S."/>
            <person name="Wang X."/>
            <person name="Rauwolf U."/>
            <person name="Silber M.V."/>
            <person name="Mayer K."/>
            <person name="Meurer J."/>
            <person name="Haberer G."/>
            <person name="Herrmann R.G."/>
        </authorList>
    </citation>
    <scope>SEQUENCE REVISION TO 140; 419; 469 AND 472-474</scope>
</reference>
<accession>Q9MTM4</accession>
<comment type="function">
    <text evidence="1">DNA-dependent RNA polymerase catalyzes the transcription of DNA into RNA using the four ribonucleoside triphosphates as substrates.</text>
</comment>
<comment type="catalytic activity">
    <reaction evidence="1">
        <text>RNA(n) + a ribonucleoside 5'-triphosphate = RNA(n+1) + diphosphate</text>
        <dbReference type="Rhea" id="RHEA:21248"/>
        <dbReference type="Rhea" id="RHEA-COMP:14527"/>
        <dbReference type="Rhea" id="RHEA-COMP:17342"/>
        <dbReference type="ChEBI" id="CHEBI:33019"/>
        <dbReference type="ChEBI" id="CHEBI:61557"/>
        <dbReference type="ChEBI" id="CHEBI:140395"/>
        <dbReference type="EC" id="2.7.7.6"/>
    </reaction>
</comment>
<comment type="cofactor">
    <cofactor evidence="1">
        <name>Mg(2+)</name>
        <dbReference type="ChEBI" id="CHEBI:18420"/>
    </cofactor>
    <text evidence="1">Binds 1 Mg(2+) ion per subunit.</text>
</comment>
<comment type="cofactor">
    <cofactor evidence="1">
        <name>Zn(2+)</name>
        <dbReference type="ChEBI" id="CHEBI:29105"/>
    </cofactor>
    <text evidence="1">Binds 1 Zn(2+) ion per subunit.</text>
</comment>
<comment type="subunit">
    <text evidence="1">In plastids the minimal PEP RNA polymerase catalytic core is composed of four subunits: alpha, beta, beta', and beta''. When a (nuclear-encoded) sigma factor is associated with the core the holoenzyme is formed, which can initiate transcription.</text>
</comment>
<comment type="subcellular location">
    <subcellularLocation>
        <location evidence="1">Plastid</location>
        <location evidence="1">Chloroplast</location>
    </subcellularLocation>
</comment>
<comment type="similarity">
    <text evidence="1">Belongs to the RNA polymerase beta' chain family. RpoC1 subfamily.</text>
</comment>
<organism>
    <name type="scientific">Oenothera elata subsp. hookeri</name>
    <name type="common">Hooker's evening primrose</name>
    <name type="synonym">Oenothera hookeri</name>
    <dbReference type="NCBI Taxonomy" id="85636"/>
    <lineage>
        <taxon>Eukaryota</taxon>
        <taxon>Viridiplantae</taxon>
        <taxon>Streptophyta</taxon>
        <taxon>Embryophyta</taxon>
        <taxon>Tracheophyta</taxon>
        <taxon>Spermatophyta</taxon>
        <taxon>Magnoliopsida</taxon>
        <taxon>eudicotyledons</taxon>
        <taxon>Gunneridae</taxon>
        <taxon>Pentapetalae</taxon>
        <taxon>rosids</taxon>
        <taxon>malvids</taxon>
        <taxon>Myrtales</taxon>
        <taxon>Onagraceae</taxon>
        <taxon>Onagroideae</taxon>
        <taxon>Onagreae</taxon>
        <taxon>Oenothera</taxon>
    </lineage>
</organism>
<feature type="chain" id="PRO_0000067885" description="DNA-directed RNA polymerase subunit beta'">
    <location>
        <begin position="1"/>
        <end position="679"/>
    </location>
</feature>
<feature type="binding site" evidence="1">
    <location>
        <position position="69"/>
    </location>
    <ligand>
        <name>Zn(2+)</name>
        <dbReference type="ChEBI" id="CHEBI:29105"/>
    </ligand>
</feature>
<feature type="binding site" evidence="1">
    <location>
        <position position="71"/>
    </location>
    <ligand>
        <name>Zn(2+)</name>
        <dbReference type="ChEBI" id="CHEBI:29105"/>
    </ligand>
</feature>
<feature type="binding site" evidence="1">
    <location>
        <position position="87"/>
    </location>
    <ligand>
        <name>Zn(2+)</name>
        <dbReference type="ChEBI" id="CHEBI:29105"/>
    </ligand>
</feature>
<feature type="binding site" evidence="1">
    <location>
        <position position="90"/>
    </location>
    <ligand>
        <name>Zn(2+)</name>
        <dbReference type="ChEBI" id="CHEBI:29105"/>
    </ligand>
</feature>
<feature type="binding site" evidence="1">
    <location>
        <position position="489"/>
    </location>
    <ligand>
        <name>Mg(2+)</name>
        <dbReference type="ChEBI" id="CHEBI:18420"/>
    </ligand>
</feature>
<feature type="binding site" evidence="1">
    <location>
        <position position="491"/>
    </location>
    <ligand>
        <name>Mg(2+)</name>
        <dbReference type="ChEBI" id="CHEBI:18420"/>
    </ligand>
</feature>
<feature type="binding site" evidence="1">
    <location>
        <position position="493"/>
    </location>
    <ligand>
        <name>Mg(2+)</name>
        <dbReference type="ChEBI" id="CHEBI:18420"/>
    </ligand>
</feature>
<sequence>MIDRYKHQQLRIGSVSPQQISTWANKILPNGEIVGEVTKPYTFHYKTNKPERDGLFCERIFGPIKSGICACGTYRVIGDKKEDPNFCEQCGVEFVDSRIRRYQMGYIKLACPATHVWYLKRLPSYIANLLDKPLKELEGLVYCDFSFARPVAKKPTFLRLRGLFEYEIQSWKYSIPLFFTTQGFDTFRNREISTGAGAIREQLAGLDLRVIIDYSLVEWKELGEERSTGNEWEDRKIGRRKQFLVRRVELAKHFIRTNIEPEWMVLCLLPVLPPELRPIIQMDGGKLMSSDINELYRRVIYRNNILADLLTTSRSTPGDLVMGQEKLVQEAVDTLLDNGIRSRPVRDGQNKVYKSFSDVIEGKEGRFRETLLGKRVDYSGRSVIVVGPTLPLHRCGLPREIAIELFQTFLIRGLIRQHLASDIVGAKSQIREKEPIVWEILQQVMQGHPVLLNRAPTLHRLGIQAFQPILVEGRAICLHPLVCKGFNADFDGDQMAVHVPLSLEAQTEARLLMFSHMNLLSPAMGDPISVPTQDMLIGLYILTSGNPRGICTNRYNPWNRSNYQNERISDNNWKKKEPFFCNSYDAIGAYRQKRIHLDSPLWLRWRLDQRVIASREVPIEVQYESLGTYHEIYGHYIIVRSVKTEILWMYIRTTVGHISLFREMEEAIQGFCRARWYLS</sequence>
<geneLocation type="chloroplast"/>
<name>RPOC1_OENEH</name>
<gene>
    <name evidence="1" type="primary">rpoC1</name>
</gene>
<protein>
    <recommendedName>
        <fullName evidence="1">DNA-directed RNA polymerase subunit beta'</fullName>
        <ecNumber evidence="1">2.7.7.6</ecNumber>
    </recommendedName>
    <alternativeName>
        <fullName evidence="1">PEP</fullName>
    </alternativeName>
    <alternativeName>
        <fullName evidence="1">Plastid-encoded RNA polymerase subunit beta'</fullName>
        <shortName evidence="1">RNA polymerase subunit beta'</shortName>
    </alternativeName>
</protein>
<proteinExistence type="inferred from homology"/>
<dbReference type="EC" id="2.7.7.6" evidence="1"/>
<dbReference type="EMBL" id="AJ271079">
    <property type="protein sequence ID" value="CAB67152.2"/>
    <property type="molecule type" value="Genomic_DNA"/>
</dbReference>
<dbReference type="RefSeq" id="NP_084687.2">
    <property type="nucleotide sequence ID" value="NC_002693.2"/>
</dbReference>
<dbReference type="SMR" id="Q9MTM4"/>
<dbReference type="GeneID" id="802824"/>
<dbReference type="GO" id="GO:0009507">
    <property type="term" value="C:chloroplast"/>
    <property type="evidence" value="ECO:0007669"/>
    <property type="project" value="UniProtKB-SubCell"/>
</dbReference>
<dbReference type="GO" id="GO:0000428">
    <property type="term" value="C:DNA-directed RNA polymerase complex"/>
    <property type="evidence" value="ECO:0007669"/>
    <property type="project" value="UniProtKB-KW"/>
</dbReference>
<dbReference type="GO" id="GO:0005739">
    <property type="term" value="C:mitochondrion"/>
    <property type="evidence" value="ECO:0007669"/>
    <property type="project" value="GOC"/>
</dbReference>
<dbReference type="GO" id="GO:0003677">
    <property type="term" value="F:DNA binding"/>
    <property type="evidence" value="ECO:0007669"/>
    <property type="project" value="UniProtKB-UniRule"/>
</dbReference>
<dbReference type="GO" id="GO:0003899">
    <property type="term" value="F:DNA-directed RNA polymerase activity"/>
    <property type="evidence" value="ECO:0007669"/>
    <property type="project" value="UniProtKB-UniRule"/>
</dbReference>
<dbReference type="GO" id="GO:0000287">
    <property type="term" value="F:magnesium ion binding"/>
    <property type="evidence" value="ECO:0007669"/>
    <property type="project" value="UniProtKB-UniRule"/>
</dbReference>
<dbReference type="GO" id="GO:0008270">
    <property type="term" value="F:zinc ion binding"/>
    <property type="evidence" value="ECO:0007669"/>
    <property type="project" value="UniProtKB-UniRule"/>
</dbReference>
<dbReference type="GO" id="GO:0006351">
    <property type="term" value="P:DNA-templated transcription"/>
    <property type="evidence" value="ECO:0007669"/>
    <property type="project" value="UniProtKB-UniRule"/>
</dbReference>
<dbReference type="FunFam" id="4.10.860.120:FF:000007">
    <property type="entry name" value="DNA-directed RNA polymerase subunit gamma"/>
    <property type="match status" value="1"/>
</dbReference>
<dbReference type="Gene3D" id="1.10.40.90">
    <property type="match status" value="1"/>
</dbReference>
<dbReference type="Gene3D" id="2.40.40.20">
    <property type="match status" value="1"/>
</dbReference>
<dbReference type="Gene3D" id="4.10.860.120">
    <property type="entry name" value="RNA polymerase II, clamp domain"/>
    <property type="match status" value="1"/>
</dbReference>
<dbReference type="Gene3D" id="1.10.274.100">
    <property type="entry name" value="RNA polymerase Rpb1, domain 3"/>
    <property type="match status" value="1"/>
</dbReference>
<dbReference type="HAMAP" id="MF_01323">
    <property type="entry name" value="RNApol_bact_RpoC1"/>
    <property type="match status" value="1"/>
</dbReference>
<dbReference type="InterPro" id="IPR045867">
    <property type="entry name" value="DNA-dir_RpoC_beta_prime"/>
</dbReference>
<dbReference type="InterPro" id="IPR000722">
    <property type="entry name" value="RNA_pol_asu"/>
</dbReference>
<dbReference type="InterPro" id="IPR006592">
    <property type="entry name" value="RNA_pol_N"/>
</dbReference>
<dbReference type="InterPro" id="IPR007080">
    <property type="entry name" value="RNA_pol_Rpb1_1"/>
</dbReference>
<dbReference type="InterPro" id="IPR042102">
    <property type="entry name" value="RNA_pol_Rpb1_3_sf"/>
</dbReference>
<dbReference type="InterPro" id="IPR044893">
    <property type="entry name" value="RNA_pol_Rpb1_clamp_domain"/>
</dbReference>
<dbReference type="InterPro" id="IPR034678">
    <property type="entry name" value="RNApol_RpoC1"/>
</dbReference>
<dbReference type="PANTHER" id="PTHR19376">
    <property type="entry name" value="DNA-DIRECTED RNA POLYMERASE"/>
    <property type="match status" value="1"/>
</dbReference>
<dbReference type="PANTHER" id="PTHR19376:SF54">
    <property type="entry name" value="DNA-DIRECTED RNA POLYMERASE SUBUNIT BETA"/>
    <property type="match status" value="1"/>
</dbReference>
<dbReference type="Pfam" id="PF04997">
    <property type="entry name" value="RNA_pol_Rpb1_1"/>
    <property type="match status" value="2"/>
</dbReference>
<dbReference type="Pfam" id="PF00623">
    <property type="entry name" value="RNA_pol_Rpb1_2"/>
    <property type="match status" value="1"/>
</dbReference>
<dbReference type="SMART" id="SM00663">
    <property type="entry name" value="RPOLA_N"/>
    <property type="match status" value="1"/>
</dbReference>
<dbReference type="SUPFAM" id="SSF64484">
    <property type="entry name" value="beta and beta-prime subunits of DNA dependent RNA-polymerase"/>
    <property type="match status" value="1"/>
</dbReference>
<evidence type="ECO:0000255" key="1">
    <source>
        <dbReference type="HAMAP-Rule" id="MF_01323"/>
    </source>
</evidence>
<keyword id="KW-0150">Chloroplast</keyword>
<keyword id="KW-0240">DNA-directed RNA polymerase</keyword>
<keyword id="KW-0460">Magnesium</keyword>
<keyword id="KW-0479">Metal-binding</keyword>
<keyword id="KW-0548">Nucleotidyltransferase</keyword>
<keyword id="KW-0934">Plastid</keyword>
<keyword id="KW-0804">Transcription</keyword>
<keyword id="KW-0808">Transferase</keyword>
<keyword id="KW-0862">Zinc</keyword>